<dbReference type="EMBL" id="CP001047">
    <property type="protein sequence ID" value="ACF07209.1"/>
    <property type="molecule type" value="Genomic_DNA"/>
</dbReference>
<dbReference type="RefSeq" id="WP_012498166.1">
    <property type="nucleotide sequence ID" value="NC_011025.1"/>
</dbReference>
<dbReference type="SMR" id="B3PMF7"/>
<dbReference type="STRING" id="243272.MARTH_orf326"/>
<dbReference type="KEGG" id="mat:MARTH_orf326"/>
<dbReference type="eggNOG" id="COG0261">
    <property type="taxonomic scope" value="Bacteria"/>
</dbReference>
<dbReference type="HOGENOM" id="CLU_061463_3_1_14"/>
<dbReference type="Proteomes" id="UP000008812">
    <property type="component" value="Chromosome"/>
</dbReference>
<dbReference type="GO" id="GO:0005737">
    <property type="term" value="C:cytoplasm"/>
    <property type="evidence" value="ECO:0007669"/>
    <property type="project" value="UniProtKB-ARBA"/>
</dbReference>
<dbReference type="GO" id="GO:1990904">
    <property type="term" value="C:ribonucleoprotein complex"/>
    <property type="evidence" value="ECO:0007669"/>
    <property type="project" value="UniProtKB-KW"/>
</dbReference>
<dbReference type="GO" id="GO:0005840">
    <property type="term" value="C:ribosome"/>
    <property type="evidence" value="ECO:0007669"/>
    <property type="project" value="UniProtKB-KW"/>
</dbReference>
<dbReference type="GO" id="GO:0019843">
    <property type="term" value="F:rRNA binding"/>
    <property type="evidence" value="ECO:0007669"/>
    <property type="project" value="UniProtKB-UniRule"/>
</dbReference>
<dbReference type="GO" id="GO:0003735">
    <property type="term" value="F:structural constituent of ribosome"/>
    <property type="evidence" value="ECO:0007669"/>
    <property type="project" value="InterPro"/>
</dbReference>
<dbReference type="GO" id="GO:0006412">
    <property type="term" value="P:translation"/>
    <property type="evidence" value="ECO:0007669"/>
    <property type="project" value="UniProtKB-UniRule"/>
</dbReference>
<dbReference type="HAMAP" id="MF_01363">
    <property type="entry name" value="Ribosomal_bL21"/>
    <property type="match status" value="1"/>
</dbReference>
<dbReference type="InterPro" id="IPR028909">
    <property type="entry name" value="bL21-like"/>
</dbReference>
<dbReference type="InterPro" id="IPR036164">
    <property type="entry name" value="bL21-like_sf"/>
</dbReference>
<dbReference type="InterPro" id="IPR001787">
    <property type="entry name" value="Ribosomal_bL21"/>
</dbReference>
<dbReference type="NCBIfam" id="TIGR00061">
    <property type="entry name" value="L21"/>
    <property type="match status" value="1"/>
</dbReference>
<dbReference type="PANTHER" id="PTHR21349">
    <property type="entry name" value="50S RIBOSOMAL PROTEIN L21"/>
    <property type="match status" value="1"/>
</dbReference>
<dbReference type="PANTHER" id="PTHR21349:SF0">
    <property type="entry name" value="LARGE RIBOSOMAL SUBUNIT PROTEIN BL21M"/>
    <property type="match status" value="1"/>
</dbReference>
<dbReference type="Pfam" id="PF00829">
    <property type="entry name" value="Ribosomal_L21p"/>
    <property type="match status" value="1"/>
</dbReference>
<dbReference type="SUPFAM" id="SSF141091">
    <property type="entry name" value="L21p-like"/>
    <property type="match status" value="1"/>
</dbReference>
<name>RL21_META1</name>
<sequence>MFAIIETGGKQIIVKAGDTIFIEKIEGKEGDKVSFDKVLAINDKIGTPYLENAAVLAAIEKQGKAKKIVVYRHNAKSTHKRKLGHRQPYTRVKILEIKEAK</sequence>
<gene>
    <name evidence="1" type="primary">rplU</name>
    <name type="ordered locus">MARTH_orf326</name>
</gene>
<proteinExistence type="inferred from homology"/>
<protein>
    <recommendedName>
        <fullName evidence="1">Large ribosomal subunit protein bL21</fullName>
    </recommendedName>
    <alternativeName>
        <fullName evidence="2">50S ribosomal protein L21</fullName>
    </alternativeName>
</protein>
<feature type="chain" id="PRO_1000143822" description="Large ribosomal subunit protein bL21">
    <location>
        <begin position="1"/>
        <end position="101"/>
    </location>
</feature>
<comment type="function">
    <text evidence="1">This protein binds to 23S rRNA in the presence of protein L20.</text>
</comment>
<comment type="subunit">
    <text evidence="1">Part of the 50S ribosomal subunit. Contacts protein L20.</text>
</comment>
<comment type="similarity">
    <text evidence="1">Belongs to the bacterial ribosomal protein bL21 family.</text>
</comment>
<accession>B3PMF7</accession>
<reference key="1">
    <citation type="journal article" date="2008" name="Infect. Immun.">
        <title>Genome of Mycoplasma arthritidis.</title>
        <authorList>
            <person name="Dybvig K."/>
            <person name="Zuhua C."/>
            <person name="Lao P."/>
            <person name="Jordan D.S."/>
            <person name="French C.T."/>
            <person name="Tu A.H."/>
            <person name="Loraine A.E."/>
        </authorList>
    </citation>
    <scope>NUCLEOTIDE SEQUENCE [LARGE SCALE GENOMIC DNA]</scope>
    <source>
        <strain>158L3-1</strain>
    </source>
</reference>
<keyword id="KW-1185">Reference proteome</keyword>
<keyword id="KW-0687">Ribonucleoprotein</keyword>
<keyword id="KW-0689">Ribosomal protein</keyword>
<keyword id="KW-0694">RNA-binding</keyword>
<keyword id="KW-0699">rRNA-binding</keyword>
<organism>
    <name type="scientific">Metamycoplasma arthritidis (strain 158L3-1)</name>
    <name type="common">Mycoplasma arthritidis</name>
    <dbReference type="NCBI Taxonomy" id="243272"/>
    <lineage>
        <taxon>Bacteria</taxon>
        <taxon>Bacillati</taxon>
        <taxon>Mycoplasmatota</taxon>
        <taxon>Mycoplasmoidales</taxon>
        <taxon>Metamycoplasmataceae</taxon>
        <taxon>Metamycoplasma</taxon>
    </lineage>
</organism>
<evidence type="ECO:0000255" key="1">
    <source>
        <dbReference type="HAMAP-Rule" id="MF_01363"/>
    </source>
</evidence>
<evidence type="ECO:0000305" key="2"/>